<proteinExistence type="inferred from homology"/>
<comment type="function">
    <text evidence="1">Catalyzes the hydrolysis of fructose 1,6-bisphosphate (Fru 1,6-P2) and sedoheptulose 1,7-bisphosphate (Sed 1,7-P2) to fructose 6-phosphate and sedoheptulose 7-phosphate, respectively.</text>
</comment>
<comment type="catalytic activity">
    <reaction>
        <text>beta-D-fructose 1,6-bisphosphate + H2O = beta-D-fructose 6-phosphate + phosphate</text>
        <dbReference type="Rhea" id="RHEA:11064"/>
        <dbReference type="ChEBI" id="CHEBI:15377"/>
        <dbReference type="ChEBI" id="CHEBI:32966"/>
        <dbReference type="ChEBI" id="CHEBI:43474"/>
        <dbReference type="ChEBI" id="CHEBI:57634"/>
        <dbReference type="EC" id="3.1.3.11"/>
    </reaction>
</comment>
<comment type="catalytic activity">
    <reaction>
        <text>D-sedoheptulose 1,7-bisphosphate + H2O = D-sedoheptulose 7-phosphate + phosphate</text>
        <dbReference type="Rhea" id="RHEA:17461"/>
        <dbReference type="ChEBI" id="CHEBI:15377"/>
        <dbReference type="ChEBI" id="CHEBI:43474"/>
        <dbReference type="ChEBI" id="CHEBI:57483"/>
        <dbReference type="ChEBI" id="CHEBI:58335"/>
        <dbReference type="EC" id="3.1.3.37"/>
    </reaction>
</comment>
<comment type="cofactor">
    <cofactor evidence="1">
        <name>Mn(2+)</name>
        <dbReference type="ChEBI" id="CHEBI:29035"/>
    </cofactor>
</comment>
<comment type="pathway">
    <text>Carbohydrate biosynthesis; Calvin cycle.</text>
</comment>
<comment type="subunit">
    <text evidence="1">Homotetramer.</text>
</comment>
<comment type="similarity">
    <text evidence="2">Belongs to the FBPase class 2 family.</text>
</comment>
<keyword id="KW-0113">Calvin cycle</keyword>
<keyword id="KW-0119">Carbohydrate metabolism</keyword>
<keyword id="KW-0378">Hydrolase</keyword>
<keyword id="KW-0464">Manganese</keyword>
<keyword id="KW-0479">Metal-binding</keyword>
<name>FBSB_MICAN</name>
<accession>B0JKN5</accession>
<evidence type="ECO:0000250" key="1"/>
<evidence type="ECO:0000305" key="2"/>
<reference key="1">
    <citation type="journal article" date="2007" name="DNA Res.">
        <title>Complete genomic structure of the bloom-forming toxic cyanobacterium Microcystis aeruginosa NIES-843.</title>
        <authorList>
            <person name="Kaneko T."/>
            <person name="Nakajima N."/>
            <person name="Okamoto S."/>
            <person name="Suzuki I."/>
            <person name="Tanabe Y."/>
            <person name="Tamaoki M."/>
            <person name="Nakamura Y."/>
            <person name="Kasai F."/>
            <person name="Watanabe A."/>
            <person name="Kawashima K."/>
            <person name="Kishida Y."/>
            <person name="Ono A."/>
            <person name="Shimizu Y."/>
            <person name="Takahashi C."/>
            <person name="Minami C."/>
            <person name="Fujishiro T."/>
            <person name="Kohara M."/>
            <person name="Katoh M."/>
            <person name="Nakazaki N."/>
            <person name="Nakayama S."/>
            <person name="Yamada M."/>
            <person name="Tabata S."/>
            <person name="Watanabe M.M."/>
        </authorList>
    </citation>
    <scope>NUCLEOTIDE SEQUENCE [LARGE SCALE GENOMIC DNA]</scope>
    <source>
        <strain>NIES-843 / IAM M-247</strain>
    </source>
</reference>
<organism>
    <name type="scientific">Microcystis aeruginosa (strain NIES-843 / IAM M-2473)</name>
    <dbReference type="NCBI Taxonomy" id="449447"/>
    <lineage>
        <taxon>Bacteria</taxon>
        <taxon>Bacillati</taxon>
        <taxon>Cyanobacteriota</taxon>
        <taxon>Cyanophyceae</taxon>
        <taxon>Oscillatoriophycideae</taxon>
        <taxon>Chroococcales</taxon>
        <taxon>Microcystaceae</taxon>
        <taxon>Microcystis</taxon>
    </lineage>
</organism>
<gene>
    <name type="ordered locus">MAE_30020</name>
</gene>
<feature type="chain" id="PRO_0000342712" description="D-fructose 1,6-bisphosphatase class 2/sedoheptulose 1,7-bisphosphatase">
    <location>
        <begin position="1"/>
        <end position="345"/>
    </location>
</feature>
<feature type="binding site" evidence="1">
    <location>
        <position position="33"/>
    </location>
    <ligand>
        <name>Mn(2+)</name>
        <dbReference type="ChEBI" id="CHEBI:29035"/>
        <label>1</label>
    </ligand>
</feature>
<feature type="binding site" evidence="1">
    <location>
        <position position="57"/>
    </location>
    <ligand>
        <name>Mn(2+)</name>
        <dbReference type="ChEBI" id="CHEBI:29035"/>
        <label>1</label>
    </ligand>
</feature>
<feature type="binding site" evidence="1">
    <location>
        <position position="97"/>
    </location>
    <ligand>
        <name>Mn(2+)</name>
        <dbReference type="ChEBI" id="CHEBI:29035"/>
        <label>2</label>
    </ligand>
</feature>
<feature type="binding site" evidence="1">
    <location>
        <begin position="100"/>
        <end position="102"/>
    </location>
    <ligand>
        <name>substrate</name>
    </ligand>
</feature>
<feature type="binding site" evidence="1">
    <location>
        <position position="100"/>
    </location>
    <ligand>
        <name>Mn(2+)</name>
        <dbReference type="ChEBI" id="CHEBI:29035"/>
        <label>2</label>
    </ligand>
</feature>
<feature type="binding site" evidence="1">
    <location>
        <position position="131"/>
    </location>
    <ligand>
        <name>substrate</name>
    </ligand>
</feature>
<feature type="binding site" evidence="1">
    <location>
        <begin position="176"/>
        <end position="178"/>
    </location>
    <ligand>
        <name>substrate</name>
    </ligand>
</feature>
<feature type="binding site" evidence="1">
    <location>
        <begin position="198"/>
        <end position="200"/>
    </location>
    <ligand>
        <name>substrate</name>
    </ligand>
</feature>
<feature type="binding site" evidence="1">
    <location>
        <position position="225"/>
    </location>
    <ligand>
        <name>Mn(2+)</name>
        <dbReference type="ChEBI" id="CHEBI:29035"/>
        <label>2</label>
    </ligand>
</feature>
<sequence length="345" mass="37247">MESTLGLEIIEVVEQAAIASSKWMGKGEKNTADHVAVEAMRERMNKIHMRGRIVIGEGERDEAPMLYIGEEVGICTQVDAKQYCNPDELVEIDIAVDPCEGTNLVAYGQNGSMAVLAISEKGGLFAAPDFYMKKLAAPPAAKGHVDINKSATENLKVLSDCLNRSIEELVVVVMDRPRHKELIQEIRNAGARVRLISDGDVSAAISCAFSGTNIHALMGIGAAPEGVISAAAMRCLGGHFQGQLIYDPEVVKTGLIGESREGNLARLQEMGITNPDRVYGCEELASGETVLFAACGITPGTLMEGVRFFHGGARTQSLVISTQSKTARFVDTVHLFDRPKYIQLR</sequence>
<protein>
    <recommendedName>
        <fullName>D-fructose 1,6-bisphosphatase class 2/sedoheptulose 1,7-bisphosphatase</fullName>
        <shortName>FBPase class 2/SBPase</shortName>
        <ecNumber>3.1.3.11</ecNumber>
        <ecNumber>3.1.3.37</ecNumber>
    </recommendedName>
</protein>
<dbReference type="EC" id="3.1.3.11"/>
<dbReference type="EC" id="3.1.3.37"/>
<dbReference type="EMBL" id="AP009552">
    <property type="protein sequence ID" value="BAG02824.1"/>
    <property type="molecule type" value="Genomic_DNA"/>
</dbReference>
<dbReference type="SMR" id="B0JKN5"/>
<dbReference type="STRING" id="449447.MAE_30020"/>
<dbReference type="PaxDb" id="449447-MAE_30020"/>
<dbReference type="EnsemblBacteria" id="BAG02824">
    <property type="protein sequence ID" value="BAG02824"/>
    <property type="gene ID" value="MAE_30020"/>
</dbReference>
<dbReference type="KEGG" id="mar:MAE_30020"/>
<dbReference type="eggNOG" id="COG1494">
    <property type="taxonomic scope" value="Bacteria"/>
</dbReference>
<dbReference type="HOGENOM" id="CLU_054938_0_0_3"/>
<dbReference type="BioCyc" id="MAER449447:MAE_RS13100-MONOMER"/>
<dbReference type="UniPathway" id="UPA00116"/>
<dbReference type="Proteomes" id="UP000001510">
    <property type="component" value="Chromosome"/>
</dbReference>
<dbReference type="GO" id="GO:0005829">
    <property type="term" value="C:cytosol"/>
    <property type="evidence" value="ECO:0007669"/>
    <property type="project" value="TreeGrafter"/>
</dbReference>
<dbReference type="GO" id="GO:0042132">
    <property type="term" value="F:fructose 1,6-bisphosphate 1-phosphatase activity"/>
    <property type="evidence" value="ECO:0007669"/>
    <property type="project" value="UniProtKB-EC"/>
</dbReference>
<dbReference type="GO" id="GO:0046872">
    <property type="term" value="F:metal ion binding"/>
    <property type="evidence" value="ECO:0007669"/>
    <property type="project" value="UniProtKB-KW"/>
</dbReference>
<dbReference type="GO" id="GO:0050278">
    <property type="term" value="F:sedoheptulose-bisphosphatase activity"/>
    <property type="evidence" value="ECO:0007669"/>
    <property type="project" value="UniProtKB-EC"/>
</dbReference>
<dbReference type="GO" id="GO:0030388">
    <property type="term" value="P:fructose 1,6-bisphosphate metabolic process"/>
    <property type="evidence" value="ECO:0007669"/>
    <property type="project" value="TreeGrafter"/>
</dbReference>
<dbReference type="GO" id="GO:0006094">
    <property type="term" value="P:gluconeogenesis"/>
    <property type="evidence" value="ECO:0007669"/>
    <property type="project" value="InterPro"/>
</dbReference>
<dbReference type="GO" id="GO:0006071">
    <property type="term" value="P:glycerol metabolic process"/>
    <property type="evidence" value="ECO:0007669"/>
    <property type="project" value="InterPro"/>
</dbReference>
<dbReference type="GO" id="GO:0019253">
    <property type="term" value="P:reductive pentose-phosphate cycle"/>
    <property type="evidence" value="ECO:0007669"/>
    <property type="project" value="UniProtKB-UniPathway"/>
</dbReference>
<dbReference type="CDD" id="cd01516">
    <property type="entry name" value="FBPase_glpX"/>
    <property type="match status" value="1"/>
</dbReference>
<dbReference type="FunFam" id="3.40.190.90:FF:000001">
    <property type="entry name" value="Fructose-1,6-bisphosphatase"/>
    <property type="match status" value="1"/>
</dbReference>
<dbReference type="Gene3D" id="3.40.190.90">
    <property type="match status" value="1"/>
</dbReference>
<dbReference type="Gene3D" id="3.30.540.10">
    <property type="entry name" value="Fructose-1,6-Bisphosphatase, subunit A, domain 1"/>
    <property type="match status" value="1"/>
</dbReference>
<dbReference type="InterPro" id="IPR004464">
    <property type="entry name" value="FBPase_class-2/SBPase"/>
</dbReference>
<dbReference type="NCBIfam" id="TIGR00330">
    <property type="entry name" value="glpX"/>
    <property type="match status" value="1"/>
</dbReference>
<dbReference type="PANTHER" id="PTHR30447:SF0">
    <property type="entry name" value="FRUCTOSE-1,6-BISPHOSPHATASE 1 CLASS 2-RELATED"/>
    <property type="match status" value="1"/>
</dbReference>
<dbReference type="PANTHER" id="PTHR30447">
    <property type="entry name" value="FRUCTOSE-1,6-BISPHOSPHATASE CLASS 2"/>
    <property type="match status" value="1"/>
</dbReference>
<dbReference type="Pfam" id="PF03320">
    <property type="entry name" value="FBPase_glpX"/>
    <property type="match status" value="1"/>
</dbReference>
<dbReference type="PIRSF" id="PIRSF004532">
    <property type="entry name" value="GlpX"/>
    <property type="match status" value="1"/>
</dbReference>
<dbReference type="SUPFAM" id="SSF56655">
    <property type="entry name" value="Carbohydrate phosphatase"/>
    <property type="match status" value="1"/>
</dbReference>